<organism>
    <name type="scientific">Pasteurella multocida (strain Pm70)</name>
    <dbReference type="NCBI Taxonomy" id="272843"/>
    <lineage>
        <taxon>Bacteria</taxon>
        <taxon>Pseudomonadati</taxon>
        <taxon>Pseudomonadota</taxon>
        <taxon>Gammaproteobacteria</taxon>
        <taxon>Pasteurellales</taxon>
        <taxon>Pasteurellaceae</taxon>
        <taxon>Pasteurella</taxon>
    </lineage>
</organism>
<name>RS14_PASMU</name>
<gene>
    <name evidence="1" type="primary">rpsN</name>
    <name evidence="1" type="synonym">rps14</name>
    <name type="ordered locus">PM1402</name>
</gene>
<keyword id="KW-1185">Reference proteome</keyword>
<keyword id="KW-0687">Ribonucleoprotein</keyword>
<keyword id="KW-0689">Ribosomal protein</keyword>
<keyword id="KW-0694">RNA-binding</keyword>
<keyword id="KW-0699">rRNA-binding</keyword>
<accession>Q9CL43</accession>
<comment type="function">
    <text evidence="1">Binds 16S rRNA, required for the assembly of 30S particles and may also be responsible for determining the conformation of the 16S rRNA at the A site.</text>
</comment>
<comment type="subunit">
    <text evidence="1">Part of the 30S ribosomal subunit. Contacts proteins S3 and S10.</text>
</comment>
<comment type="similarity">
    <text evidence="1">Belongs to the universal ribosomal protein uS14 family.</text>
</comment>
<feature type="chain" id="PRO_0000130916" description="Small ribosomal subunit protein uS14">
    <location>
        <begin position="1"/>
        <end position="101"/>
    </location>
</feature>
<sequence length="101" mass="11647">MAKQSMKARDVKRVKLAEKFYAKRAELKQIISDVNASDEDRWNAVLKLQTLPRDSSPSRQRNRCRQTGRPHGVLRKFGLSRIKVREAAMRGEIPGLKKASW</sequence>
<protein>
    <recommendedName>
        <fullName evidence="1">Small ribosomal subunit protein uS14</fullName>
    </recommendedName>
    <alternativeName>
        <fullName evidence="2">30S ribosomal protein S14</fullName>
    </alternativeName>
</protein>
<evidence type="ECO:0000255" key="1">
    <source>
        <dbReference type="HAMAP-Rule" id="MF_00537"/>
    </source>
</evidence>
<evidence type="ECO:0000305" key="2"/>
<dbReference type="EMBL" id="AE004439">
    <property type="protein sequence ID" value="AAK03486.1"/>
    <property type="molecule type" value="Genomic_DNA"/>
</dbReference>
<dbReference type="RefSeq" id="WP_005717919.1">
    <property type="nucleotide sequence ID" value="NC_002663.1"/>
</dbReference>
<dbReference type="SMR" id="Q9CL43"/>
<dbReference type="STRING" id="272843.PM1402"/>
<dbReference type="EnsemblBacteria" id="AAK03486">
    <property type="protein sequence ID" value="AAK03486"/>
    <property type="gene ID" value="PM1402"/>
</dbReference>
<dbReference type="GeneID" id="77207039"/>
<dbReference type="KEGG" id="pmu:PM1402"/>
<dbReference type="HOGENOM" id="CLU_139869_0_1_6"/>
<dbReference type="OrthoDB" id="9810484at2"/>
<dbReference type="Proteomes" id="UP000000809">
    <property type="component" value="Chromosome"/>
</dbReference>
<dbReference type="GO" id="GO:0005737">
    <property type="term" value="C:cytoplasm"/>
    <property type="evidence" value="ECO:0007669"/>
    <property type="project" value="UniProtKB-ARBA"/>
</dbReference>
<dbReference type="GO" id="GO:0015935">
    <property type="term" value="C:small ribosomal subunit"/>
    <property type="evidence" value="ECO:0007669"/>
    <property type="project" value="TreeGrafter"/>
</dbReference>
<dbReference type="GO" id="GO:0019843">
    <property type="term" value="F:rRNA binding"/>
    <property type="evidence" value="ECO:0007669"/>
    <property type="project" value="UniProtKB-UniRule"/>
</dbReference>
<dbReference type="GO" id="GO:0003735">
    <property type="term" value="F:structural constituent of ribosome"/>
    <property type="evidence" value="ECO:0007669"/>
    <property type="project" value="InterPro"/>
</dbReference>
<dbReference type="GO" id="GO:0006412">
    <property type="term" value="P:translation"/>
    <property type="evidence" value="ECO:0007669"/>
    <property type="project" value="UniProtKB-UniRule"/>
</dbReference>
<dbReference type="FunFam" id="1.10.287.1480:FF:000001">
    <property type="entry name" value="30S ribosomal protein S14"/>
    <property type="match status" value="1"/>
</dbReference>
<dbReference type="Gene3D" id="1.10.287.1480">
    <property type="match status" value="1"/>
</dbReference>
<dbReference type="HAMAP" id="MF_00537">
    <property type="entry name" value="Ribosomal_uS14_1"/>
    <property type="match status" value="1"/>
</dbReference>
<dbReference type="InterPro" id="IPR001209">
    <property type="entry name" value="Ribosomal_uS14"/>
</dbReference>
<dbReference type="InterPro" id="IPR023036">
    <property type="entry name" value="Ribosomal_uS14_bac/plastid"/>
</dbReference>
<dbReference type="InterPro" id="IPR018271">
    <property type="entry name" value="Ribosomal_uS14_CS"/>
</dbReference>
<dbReference type="NCBIfam" id="NF006477">
    <property type="entry name" value="PRK08881.1"/>
    <property type="match status" value="1"/>
</dbReference>
<dbReference type="PANTHER" id="PTHR19836">
    <property type="entry name" value="30S RIBOSOMAL PROTEIN S14"/>
    <property type="match status" value="1"/>
</dbReference>
<dbReference type="PANTHER" id="PTHR19836:SF19">
    <property type="entry name" value="SMALL RIBOSOMAL SUBUNIT PROTEIN US14M"/>
    <property type="match status" value="1"/>
</dbReference>
<dbReference type="Pfam" id="PF00253">
    <property type="entry name" value="Ribosomal_S14"/>
    <property type="match status" value="1"/>
</dbReference>
<dbReference type="SUPFAM" id="SSF57716">
    <property type="entry name" value="Glucocorticoid receptor-like (DNA-binding domain)"/>
    <property type="match status" value="1"/>
</dbReference>
<dbReference type="PROSITE" id="PS00527">
    <property type="entry name" value="RIBOSOMAL_S14"/>
    <property type="match status" value="1"/>
</dbReference>
<proteinExistence type="inferred from homology"/>
<reference key="1">
    <citation type="journal article" date="2001" name="Proc. Natl. Acad. Sci. U.S.A.">
        <title>Complete genomic sequence of Pasteurella multocida Pm70.</title>
        <authorList>
            <person name="May B.J."/>
            <person name="Zhang Q."/>
            <person name="Li L.L."/>
            <person name="Paustian M.L."/>
            <person name="Whittam T.S."/>
            <person name="Kapur V."/>
        </authorList>
    </citation>
    <scope>NUCLEOTIDE SEQUENCE [LARGE SCALE GENOMIC DNA]</scope>
    <source>
        <strain>Pm70</strain>
    </source>
</reference>